<reference key="1">
    <citation type="journal article" date="2009" name="PLoS ONE">
        <title>Complete genome sequence of Francisella tularensis subspecies holarctica FTNF002-00.</title>
        <authorList>
            <person name="Barabote R.D."/>
            <person name="Xie G."/>
            <person name="Brettin T.S."/>
            <person name="Hinrichs S.H."/>
            <person name="Fey P.D."/>
            <person name="Jay J.J."/>
            <person name="Engle J.L."/>
            <person name="Godbole S.D."/>
            <person name="Noronha J.M."/>
            <person name="Scheuermann R.H."/>
            <person name="Zhou L.W."/>
            <person name="Lion C."/>
            <person name="Dempsey M.P."/>
        </authorList>
    </citation>
    <scope>NUCLEOTIDE SEQUENCE [LARGE SCALE GENOMIC DNA]</scope>
    <source>
        <strain>FTNF002-00 / FTA</strain>
    </source>
</reference>
<name>ACCA_FRATF</name>
<accession>A7N9Y7</accession>
<dbReference type="EC" id="2.1.3.15" evidence="1"/>
<dbReference type="EMBL" id="CP000803">
    <property type="protein sequence ID" value="ABU60790.1"/>
    <property type="molecule type" value="Genomic_DNA"/>
</dbReference>
<dbReference type="RefSeq" id="WP_003018337.1">
    <property type="nucleotide sequence ID" value="NC_009749.1"/>
</dbReference>
<dbReference type="SMR" id="A7N9Y7"/>
<dbReference type="KEGG" id="fta:FTA_0313"/>
<dbReference type="HOGENOM" id="CLU_015486_0_2_6"/>
<dbReference type="UniPathway" id="UPA00655">
    <property type="reaction ID" value="UER00711"/>
</dbReference>
<dbReference type="GO" id="GO:0009317">
    <property type="term" value="C:acetyl-CoA carboxylase complex"/>
    <property type="evidence" value="ECO:0007669"/>
    <property type="project" value="InterPro"/>
</dbReference>
<dbReference type="GO" id="GO:0003989">
    <property type="term" value="F:acetyl-CoA carboxylase activity"/>
    <property type="evidence" value="ECO:0007669"/>
    <property type="project" value="InterPro"/>
</dbReference>
<dbReference type="GO" id="GO:0005524">
    <property type="term" value="F:ATP binding"/>
    <property type="evidence" value="ECO:0007669"/>
    <property type="project" value="UniProtKB-KW"/>
</dbReference>
<dbReference type="GO" id="GO:0016743">
    <property type="term" value="F:carboxyl- or carbamoyltransferase activity"/>
    <property type="evidence" value="ECO:0007669"/>
    <property type="project" value="UniProtKB-UniRule"/>
</dbReference>
<dbReference type="GO" id="GO:0006633">
    <property type="term" value="P:fatty acid biosynthetic process"/>
    <property type="evidence" value="ECO:0007669"/>
    <property type="project" value="UniProtKB-KW"/>
</dbReference>
<dbReference type="GO" id="GO:2001295">
    <property type="term" value="P:malonyl-CoA biosynthetic process"/>
    <property type="evidence" value="ECO:0007669"/>
    <property type="project" value="UniProtKB-UniRule"/>
</dbReference>
<dbReference type="Gene3D" id="3.90.226.10">
    <property type="entry name" value="2-enoyl-CoA Hydratase, Chain A, domain 1"/>
    <property type="match status" value="1"/>
</dbReference>
<dbReference type="HAMAP" id="MF_00823">
    <property type="entry name" value="AcetylCoA_CT_alpha"/>
    <property type="match status" value="1"/>
</dbReference>
<dbReference type="InterPro" id="IPR001095">
    <property type="entry name" value="Acetyl_CoA_COase_a_su"/>
</dbReference>
<dbReference type="InterPro" id="IPR029045">
    <property type="entry name" value="ClpP/crotonase-like_dom_sf"/>
</dbReference>
<dbReference type="InterPro" id="IPR011763">
    <property type="entry name" value="COA_CT_C"/>
</dbReference>
<dbReference type="NCBIfam" id="TIGR00513">
    <property type="entry name" value="accA"/>
    <property type="match status" value="1"/>
</dbReference>
<dbReference type="NCBIfam" id="NF041504">
    <property type="entry name" value="AccA_sub"/>
    <property type="match status" value="1"/>
</dbReference>
<dbReference type="NCBIfam" id="NF004344">
    <property type="entry name" value="PRK05724.1"/>
    <property type="match status" value="1"/>
</dbReference>
<dbReference type="PANTHER" id="PTHR42853">
    <property type="entry name" value="ACETYL-COENZYME A CARBOXYLASE CARBOXYL TRANSFERASE SUBUNIT ALPHA"/>
    <property type="match status" value="1"/>
</dbReference>
<dbReference type="PANTHER" id="PTHR42853:SF3">
    <property type="entry name" value="ACETYL-COENZYME A CARBOXYLASE CARBOXYL TRANSFERASE SUBUNIT ALPHA, CHLOROPLASTIC"/>
    <property type="match status" value="1"/>
</dbReference>
<dbReference type="Pfam" id="PF03255">
    <property type="entry name" value="ACCA"/>
    <property type="match status" value="1"/>
</dbReference>
<dbReference type="PRINTS" id="PR01069">
    <property type="entry name" value="ACCCTRFRASEA"/>
</dbReference>
<dbReference type="SUPFAM" id="SSF52096">
    <property type="entry name" value="ClpP/crotonase"/>
    <property type="match status" value="1"/>
</dbReference>
<dbReference type="PROSITE" id="PS50989">
    <property type="entry name" value="COA_CT_CTER"/>
    <property type="match status" value="1"/>
</dbReference>
<feature type="chain" id="PRO_1000062620" description="Acetyl-coenzyme A carboxylase carboxyl transferase subunit alpha">
    <location>
        <begin position="1"/>
        <end position="315"/>
    </location>
</feature>
<feature type="domain" description="CoA carboxyltransferase C-terminal" evidence="2">
    <location>
        <begin position="36"/>
        <end position="289"/>
    </location>
</feature>
<protein>
    <recommendedName>
        <fullName evidence="1">Acetyl-coenzyme A carboxylase carboxyl transferase subunit alpha</fullName>
        <shortName evidence="1">ACCase subunit alpha</shortName>
        <shortName evidence="1">Acetyl-CoA carboxylase carboxyltransferase subunit alpha</shortName>
        <ecNumber evidence="1">2.1.3.15</ecNumber>
    </recommendedName>
</protein>
<proteinExistence type="inferred from homology"/>
<keyword id="KW-0067">ATP-binding</keyword>
<keyword id="KW-0963">Cytoplasm</keyword>
<keyword id="KW-0275">Fatty acid biosynthesis</keyword>
<keyword id="KW-0276">Fatty acid metabolism</keyword>
<keyword id="KW-0444">Lipid biosynthesis</keyword>
<keyword id="KW-0443">Lipid metabolism</keyword>
<keyword id="KW-0547">Nucleotide-binding</keyword>
<keyword id="KW-0808">Transferase</keyword>
<organism>
    <name type="scientific">Francisella tularensis subsp. holarctica (strain FTNF002-00 / FTA)</name>
    <dbReference type="NCBI Taxonomy" id="458234"/>
    <lineage>
        <taxon>Bacteria</taxon>
        <taxon>Pseudomonadati</taxon>
        <taxon>Pseudomonadota</taxon>
        <taxon>Gammaproteobacteria</taxon>
        <taxon>Thiotrichales</taxon>
        <taxon>Francisellaceae</taxon>
        <taxon>Francisella</taxon>
    </lineage>
</organism>
<gene>
    <name evidence="1" type="primary">accA</name>
    <name type="ordered locus">FTA_0313</name>
</gene>
<sequence length="315" mass="35436">MNYLDFESKIKEIEDKITSLSHVFEDEKTEAEIKKLSKKRLELMESTYSKLTDWQVVQLSRHPDRPYFKDLLPLIFTDFQELHGDRTFGDDLAVIGGLAKLNNKPVMVIGQEKGRDTKSKIKHNFGMMHPEGYRKALRLMKLAEKFNMPVVTFIDTPGAYPGIKAEERGQSEAIARNLLEMSALKVPVVCIVIGEGCSGGALGIGVGDRLLMLQYSYFATISPEGCASILHKTAEKASEVTQMMNITSGRLKELKIVDEVIPEPLGGAHRDYETTATNIRKAVAAELKILSEMTVEQRNSRRYDKLMSFGRFKEA</sequence>
<comment type="function">
    <text evidence="1">Component of the acetyl coenzyme A carboxylase (ACC) complex. First, biotin carboxylase catalyzes the carboxylation of biotin on its carrier protein (BCCP) and then the CO(2) group is transferred by the carboxyltransferase to acetyl-CoA to form malonyl-CoA.</text>
</comment>
<comment type="catalytic activity">
    <reaction evidence="1">
        <text>N(6)-carboxybiotinyl-L-lysyl-[protein] + acetyl-CoA = N(6)-biotinyl-L-lysyl-[protein] + malonyl-CoA</text>
        <dbReference type="Rhea" id="RHEA:54728"/>
        <dbReference type="Rhea" id="RHEA-COMP:10505"/>
        <dbReference type="Rhea" id="RHEA-COMP:10506"/>
        <dbReference type="ChEBI" id="CHEBI:57288"/>
        <dbReference type="ChEBI" id="CHEBI:57384"/>
        <dbReference type="ChEBI" id="CHEBI:83144"/>
        <dbReference type="ChEBI" id="CHEBI:83145"/>
        <dbReference type="EC" id="2.1.3.15"/>
    </reaction>
</comment>
<comment type="pathway">
    <text evidence="1">Lipid metabolism; malonyl-CoA biosynthesis; malonyl-CoA from acetyl-CoA: step 1/1.</text>
</comment>
<comment type="subunit">
    <text evidence="1">Acetyl-CoA carboxylase is a heterohexamer composed of biotin carboxyl carrier protein (AccB), biotin carboxylase (AccC) and two subunits each of ACCase subunit alpha (AccA) and ACCase subunit beta (AccD).</text>
</comment>
<comment type="subcellular location">
    <subcellularLocation>
        <location evidence="1">Cytoplasm</location>
    </subcellularLocation>
</comment>
<comment type="similarity">
    <text evidence="1">Belongs to the AccA family.</text>
</comment>
<evidence type="ECO:0000255" key="1">
    <source>
        <dbReference type="HAMAP-Rule" id="MF_00823"/>
    </source>
</evidence>
<evidence type="ECO:0000255" key="2">
    <source>
        <dbReference type="PROSITE-ProRule" id="PRU01137"/>
    </source>
</evidence>